<keyword id="KW-1185">Reference proteome</keyword>
<keyword id="KW-0687">Ribonucleoprotein</keyword>
<keyword id="KW-0689">Ribosomal protein</keyword>
<keyword id="KW-0694">RNA-binding</keyword>
<keyword id="KW-0699">rRNA-binding</keyword>
<dbReference type="EMBL" id="CP000896">
    <property type="protein sequence ID" value="ABX80732.1"/>
    <property type="molecule type" value="Genomic_DNA"/>
</dbReference>
<dbReference type="RefSeq" id="WP_012242063.1">
    <property type="nucleotide sequence ID" value="NC_010163.1"/>
</dbReference>
<dbReference type="SMR" id="A9NEF2"/>
<dbReference type="STRING" id="441768.ACL_0106"/>
<dbReference type="GeneID" id="41338308"/>
<dbReference type="KEGG" id="acl:ACL_0106"/>
<dbReference type="eggNOG" id="COG0200">
    <property type="taxonomic scope" value="Bacteria"/>
</dbReference>
<dbReference type="HOGENOM" id="CLU_055188_4_2_14"/>
<dbReference type="OrthoDB" id="9810293at2"/>
<dbReference type="Proteomes" id="UP000008558">
    <property type="component" value="Chromosome"/>
</dbReference>
<dbReference type="GO" id="GO:0022625">
    <property type="term" value="C:cytosolic large ribosomal subunit"/>
    <property type="evidence" value="ECO:0007669"/>
    <property type="project" value="TreeGrafter"/>
</dbReference>
<dbReference type="GO" id="GO:0019843">
    <property type="term" value="F:rRNA binding"/>
    <property type="evidence" value="ECO:0007669"/>
    <property type="project" value="UniProtKB-UniRule"/>
</dbReference>
<dbReference type="GO" id="GO:0003735">
    <property type="term" value="F:structural constituent of ribosome"/>
    <property type="evidence" value="ECO:0007669"/>
    <property type="project" value="InterPro"/>
</dbReference>
<dbReference type="GO" id="GO:0006412">
    <property type="term" value="P:translation"/>
    <property type="evidence" value="ECO:0007669"/>
    <property type="project" value="UniProtKB-UniRule"/>
</dbReference>
<dbReference type="Gene3D" id="3.100.10.10">
    <property type="match status" value="1"/>
</dbReference>
<dbReference type="HAMAP" id="MF_01341">
    <property type="entry name" value="Ribosomal_uL15"/>
    <property type="match status" value="1"/>
</dbReference>
<dbReference type="InterPro" id="IPR030878">
    <property type="entry name" value="Ribosomal_uL15"/>
</dbReference>
<dbReference type="InterPro" id="IPR021131">
    <property type="entry name" value="Ribosomal_uL15/eL18"/>
</dbReference>
<dbReference type="InterPro" id="IPR036227">
    <property type="entry name" value="Ribosomal_uL15/eL18_sf"/>
</dbReference>
<dbReference type="InterPro" id="IPR005749">
    <property type="entry name" value="Ribosomal_uL15_bac-type"/>
</dbReference>
<dbReference type="InterPro" id="IPR001196">
    <property type="entry name" value="Ribosomal_uL15_CS"/>
</dbReference>
<dbReference type="NCBIfam" id="TIGR01071">
    <property type="entry name" value="rplO_bact"/>
    <property type="match status" value="1"/>
</dbReference>
<dbReference type="PANTHER" id="PTHR12934">
    <property type="entry name" value="50S RIBOSOMAL PROTEIN L15"/>
    <property type="match status" value="1"/>
</dbReference>
<dbReference type="PANTHER" id="PTHR12934:SF11">
    <property type="entry name" value="LARGE RIBOSOMAL SUBUNIT PROTEIN UL15M"/>
    <property type="match status" value="1"/>
</dbReference>
<dbReference type="Pfam" id="PF00828">
    <property type="entry name" value="Ribosomal_L27A"/>
    <property type="match status" value="1"/>
</dbReference>
<dbReference type="SUPFAM" id="SSF52080">
    <property type="entry name" value="Ribosomal proteins L15p and L18e"/>
    <property type="match status" value="1"/>
</dbReference>
<dbReference type="PROSITE" id="PS00475">
    <property type="entry name" value="RIBOSOMAL_L15"/>
    <property type="match status" value="1"/>
</dbReference>
<accession>A9NEF2</accession>
<evidence type="ECO:0000255" key="1">
    <source>
        <dbReference type="HAMAP-Rule" id="MF_01341"/>
    </source>
</evidence>
<evidence type="ECO:0000256" key="2">
    <source>
        <dbReference type="SAM" id="MobiDB-lite"/>
    </source>
</evidence>
<evidence type="ECO:0000305" key="3"/>
<reference key="1">
    <citation type="journal article" date="2011" name="J. Bacteriol.">
        <title>Complete genome and proteome of Acholeplasma laidlawii.</title>
        <authorList>
            <person name="Lazarev V.N."/>
            <person name="Levitskii S.A."/>
            <person name="Basovskii Y.I."/>
            <person name="Chukin M.M."/>
            <person name="Akopian T.A."/>
            <person name="Vereshchagin V.V."/>
            <person name="Kostrjukova E.S."/>
            <person name="Kovaleva G.Y."/>
            <person name="Kazanov M.D."/>
            <person name="Malko D.B."/>
            <person name="Vitreschak A.G."/>
            <person name="Sernova N.V."/>
            <person name="Gelfand M.S."/>
            <person name="Demina I.A."/>
            <person name="Serebryakova M.V."/>
            <person name="Galyamina M.A."/>
            <person name="Vtyurin N.N."/>
            <person name="Rogov S.I."/>
            <person name="Alexeev D.G."/>
            <person name="Ladygina V.G."/>
            <person name="Govorun V.M."/>
        </authorList>
    </citation>
    <scope>NUCLEOTIDE SEQUENCE [LARGE SCALE GENOMIC DNA]</scope>
    <source>
        <strain>PG-8A</strain>
    </source>
</reference>
<protein>
    <recommendedName>
        <fullName evidence="1">Large ribosomal subunit protein uL15</fullName>
    </recommendedName>
    <alternativeName>
        <fullName evidence="3">50S ribosomal protein L15</fullName>
    </alternativeName>
</protein>
<gene>
    <name evidence="1" type="primary">rplO</name>
    <name type="ordered locus">ACL_0106</name>
</gene>
<name>RL15_ACHLI</name>
<comment type="function">
    <text evidence="1">Binds to the 23S rRNA.</text>
</comment>
<comment type="subunit">
    <text evidence="1">Part of the 50S ribosomal subunit.</text>
</comment>
<comment type="similarity">
    <text evidence="1">Belongs to the universal ribosomal protein uL15 family.</text>
</comment>
<feature type="chain" id="PRO_1000086698" description="Large ribosomal subunit protein uL15">
    <location>
        <begin position="1"/>
        <end position="146"/>
    </location>
</feature>
<feature type="region of interest" description="Disordered" evidence="2">
    <location>
        <begin position="1"/>
        <end position="53"/>
    </location>
</feature>
<feature type="compositionally biased region" description="Gly residues" evidence="2">
    <location>
        <begin position="21"/>
        <end position="31"/>
    </location>
</feature>
<feature type="compositionally biased region" description="Gly residues" evidence="2">
    <location>
        <begin position="42"/>
        <end position="52"/>
    </location>
</feature>
<sequence>MILSNLKPVPGARHSKKRLGRGPGSGTGKTSGKGHKGQKARSGGGVRPGFEGGQIPFFQRIPKRGFNNHTRVEYAIVNTKELNVFEDGTVVTPELLLQTKLVSKVLAGVKILADGKLEKKLTVKANKFSNSAKEAIEAAGGTIEVI</sequence>
<proteinExistence type="inferred from homology"/>
<organism>
    <name type="scientific">Acholeplasma laidlawii (strain PG-8A)</name>
    <dbReference type="NCBI Taxonomy" id="441768"/>
    <lineage>
        <taxon>Bacteria</taxon>
        <taxon>Bacillati</taxon>
        <taxon>Mycoplasmatota</taxon>
        <taxon>Mollicutes</taxon>
        <taxon>Acholeplasmatales</taxon>
        <taxon>Acholeplasmataceae</taxon>
        <taxon>Acholeplasma</taxon>
    </lineage>
</organism>